<dbReference type="EC" id="2.7.4.1" evidence="1"/>
<dbReference type="EMBL" id="CH464491">
    <property type="protein sequence ID" value="EAN80172.1"/>
    <property type="molecule type" value="Genomic_DNA"/>
</dbReference>
<dbReference type="RefSeq" id="XP_829284.1">
    <property type="nucleotide sequence ID" value="XM_824191.1"/>
</dbReference>
<dbReference type="SMR" id="Q382V9"/>
<dbReference type="FunCoup" id="Q382V9">
    <property type="interactions" value="20"/>
</dbReference>
<dbReference type="STRING" id="185431.Q382V9"/>
<dbReference type="SwissPalm" id="Q382V9"/>
<dbReference type="PaxDb" id="5691-EAN80172"/>
<dbReference type="GeneID" id="3665506"/>
<dbReference type="KEGG" id="tbr:Tb11.01.4040"/>
<dbReference type="VEuPathDB" id="TriTrypDB:Tb927.11.12220"/>
<dbReference type="eggNOG" id="KOG1161">
    <property type="taxonomic scope" value="Eukaryota"/>
</dbReference>
<dbReference type="InParanoid" id="Q382V9"/>
<dbReference type="OrthoDB" id="6493944at2759"/>
<dbReference type="Proteomes" id="UP000008524">
    <property type="component" value="Chromosome 11 Scaffold 1"/>
</dbReference>
<dbReference type="GO" id="GO:0020022">
    <property type="term" value="C:acidocalcisome"/>
    <property type="evidence" value="ECO:0000314"/>
    <property type="project" value="GeneDB"/>
</dbReference>
<dbReference type="GO" id="GO:0033102">
    <property type="term" value="C:acidocalcisome membrane"/>
    <property type="evidence" value="ECO:0007669"/>
    <property type="project" value="UniProtKB-SubCell"/>
</dbReference>
<dbReference type="GO" id="GO:0005783">
    <property type="term" value="C:endoplasmic reticulum"/>
    <property type="evidence" value="ECO:0000318"/>
    <property type="project" value="GO_Central"/>
</dbReference>
<dbReference type="GO" id="GO:0033254">
    <property type="term" value="C:vacuolar transporter chaperone complex"/>
    <property type="evidence" value="ECO:0000314"/>
    <property type="project" value="GeneDB"/>
</dbReference>
<dbReference type="GO" id="GO:0005524">
    <property type="term" value="F:ATP binding"/>
    <property type="evidence" value="ECO:0007669"/>
    <property type="project" value="UniProtKB-KW"/>
</dbReference>
<dbReference type="GO" id="GO:0046872">
    <property type="term" value="F:metal ion binding"/>
    <property type="evidence" value="ECO:0000314"/>
    <property type="project" value="GeneDB"/>
</dbReference>
<dbReference type="GO" id="GO:0008976">
    <property type="term" value="F:polyphosphate kinase activity"/>
    <property type="evidence" value="ECO:0000314"/>
    <property type="project" value="GeneDB"/>
</dbReference>
<dbReference type="GO" id="GO:0006799">
    <property type="term" value="P:polyphosphate biosynthetic process"/>
    <property type="evidence" value="ECO:0000314"/>
    <property type="project" value="GeneDB"/>
</dbReference>
<dbReference type="CDD" id="cd07751">
    <property type="entry name" value="PolyPPase_VTC4_like"/>
    <property type="match status" value="1"/>
</dbReference>
<dbReference type="Gene3D" id="3.20.100.30">
    <property type="entry name" value="VTC, catalytic tunnel domain"/>
    <property type="match status" value="1"/>
</dbReference>
<dbReference type="InterPro" id="IPR051572">
    <property type="entry name" value="VTC_Complex_Subunit"/>
</dbReference>
<dbReference type="InterPro" id="IPR018966">
    <property type="entry name" value="VTC_domain"/>
</dbReference>
<dbReference type="InterPro" id="IPR042267">
    <property type="entry name" value="VTC_sf"/>
</dbReference>
<dbReference type="PANTHER" id="PTHR46140">
    <property type="entry name" value="VACUOLAR TRANSPORTER CHAPERONE 1-RELATED"/>
    <property type="match status" value="1"/>
</dbReference>
<dbReference type="PANTHER" id="PTHR46140:SF1">
    <property type="entry name" value="VACUOLAR TRANSPORTER CHAPERONE COMPLEX SUBUNIT 4-RELATED"/>
    <property type="match status" value="1"/>
</dbReference>
<dbReference type="Pfam" id="PF09359">
    <property type="entry name" value="VTC"/>
    <property type="match status" value="1"/>
</dbReference>
<accession>Q382V9</accession>
<organism evidence="8">
    <name type="scientific">Trypanosoma brucei brucei (strain 927/4 GUTat10.1)</name>
    <dbReference type="NCBI Taxonomy" id="185431"/>
    <lineage>
        <taxon>Eukaryota</taxon>
        <taxon>Discoba</taxon>
        <taxon>Euglenozoa</taxon>
        <taxon>Kinetoplastea</taxon>
        <taxon>Metakinetoplastina</taxon>
        <taxon>Trypanosomatida</taxon>
        <taxon>Trypanosomatidae</taxon>
        <taxon>Trypanosoma</taxon>
    </lineage>
</organism>
<comment type="function">
    <text evidence="1 4 5">Component of a polyphosphate synthase complex that utilizes ATP to synthesize and translocate polyphosphate to acidocalcisomes in epimastigotes, insect-stages of Trypanosoma brucei (PubMed:24386955). Catalytic subunit of the vacuolar transporter chaperone (VTC) complex. The VTC complex acts as a vacuolar polyphosphate polymerase that catalyzes the synthesis of inorganic polyphosphate (polyP) via transfer of phosphate from ATP to a growing polyP chain, releasing ADP. VTC exposes its catalytic domain vtc4 to the cytosol, where the growing polyP chain winds through a tunnel-shaped pocket, integrating cytoplasmic polymer synthesis with polyP membrane translocation. The VTC complex carries 9 vacuolar transmembrane domains, which are likely to constitute the translocation channel into the organelle lumen. PolyP synthesis is tightly coupled to its transport into the vacuole lumen, in order to avoid otherwise toxic intermediates in the cytosol, and it depends on the proton gradient across the membrane, formed by V-ATPase. The VTC complex also plays a role in vacuolar membrane fusion (By similarity). Essential for infection and parasite survival in the mammalian host (PubMed:24114837).</text>
</comment>
<comment type="catalytic activity">
    <reaction evidence="4">
        <text>[phosphate](n) + ATP = [phosphate](n+1) + ADP</text>
        <dbReference type="Rhea" id="RHEA:19573"/>
        <dbReference type="Rhea" id="RHEA-COMP:9859"/>
        <dbReference type="Rhea" id="RHEA-COMP:14280"/>
        <dbReference type="ChEBI" id="CHEBI:16838"/>
        <dbReference type="ChEBI" id="CHEBI:30616"/>
        <dbReference type="ChEBI" id="CHEBI:456216"/>
        <dbReference type="EC" id="2.7.4.1"/>
    </reaction>
    <physiologicalReaction direction="left-to-right" evidence="4">
        <dbReference type="Rhea" id="RHEA:19574"/>
    </physiologicalReaction>
</comment>
<comment type="cofactor">
    <cofactor evidence="1">
        <name>Mn(2+)</name>
        <dbReference type="ChEBI" id="CHEBI:29035"/>
    </cofactor>
</comment>
<comment type="activity regulation">
    <text evidence="1">Activity of the enzyme is Mn(2+)-dependent and enhanced in the presence of pyrophosphate (PPi).</text>
</comment>
<comment type="biophysicochemical properties">
    <kinetics>
        <KM evidence="4">54.8 uM for ATP</KM>
        <Vmax evidence="4">10.2 umol/min/mg enzyme</Vmax>
    </kinetics>
</comment>
<comment type="subunit">
    <text evidence="1">The VTC core complex is an integral membrane heterooligomer composed of at least the catalytic subunit vtc4 and the accessory subunits vtc1 and vtc2. vtc1 is a small membrane protein without hydrophilic domain. Vtc2 and vtc4 are related and have 2 hydrophilic domains that face the cytosol, an N-terminal SPX domain and the central core domain. The central core in vtc4 is the catalytic domain.</text>
</comment>
<comment type="subcellular location">
    <subcellularLocation>
        <location evidence="4 5">Acidocalcisome membrane</location>
        <topology evidence="2">Multi-pass membrane protein</topology>
    </subcellularLocation>
    <text evidence="4">Localizes to acidocalcisomes of procyclic (PCF) and bloodstream (BSF) forms of T.brucei.</text>
</comment>
<comment type="domain">
    <text evidence="1">The SPX domain has very high affinity for inositol polyphosphates. SPX domains may integrate inositol pyrophosphates (PP-InsP)-dependent signaling to adapt cytosolic phosphate concentrations to different metabolic situations.</text>
</comment>
<comment type="disruption phenotype">
    <text evidence="4 5">Is considerably less virulent in mice (PubMed:24114837). Reduces short chain polyP levels and results in accumulation of PPi (PubMed:24386955).</text>
</comment>
<comment type="similarity">
    <text evidence="6">Belongs to the VTC4 family.</text>
</comment>
<name>VTC4_TRYB2</name>
<protein>
    <recommendedName>
        <fullName>Vacuolar transporter chaperone complex subunit 4</fullName>
    </recommendedName>
    <alternativeName>
        <fullName>Polyphosphate kinase</fullName>
    </alternativeName>
    <alternativeName>
        <fullName>SPX-dependent polyphosphate polymerase VTC subunit 4</fullName>
    </alternativeName>
    <alternativeName>
        <fullName>Vacuolar membrane polyphosphate polymerase catalytic subunit</fullName>
        <shortName>PolyP polymerase</shortName>
        <ecNumber evidence="1">2.7.4.1</ecNumber>
    </alternativeName>
</protein>
<gene>
    <name type="primary">vtc4</name>
    <name evidence="7" type="ORF">Tb11.01.4040</name>
</gene>
<proteinExistence type="evidence at protein level"/>
<feature type="chain" id="PRO_0000457147" description="Vacuolar transporter chaperone complex subunit 4">
    <location>
        <begin position="1"/>
        <end position="793"/>
    </location>
</feature>
<feature type="topological domain" description="Cytoplasmic" evidence="1">
    <location>
        <begin position="1"/>
        <end position="684"/>
    </location>
</feature>
<feature type="transmembrane region" description="Helical" evidence="2">
    <location>
        <begin position="685"/>
        <end position="705"/>
    </location>
</feature>
<feature type="topological domain" description="Vacuolar" evidence="1">
    <location>
        <begin position="706"/>
        <end position="717"/>
    </location>
</feature>
<feature type="transmembrane region" description="Helical" evidence="2">
    <location>
        <begin position="718"/>
        <end position="738"/>
    </location>
</feature>
<feature type="topological domain" description="Cytoplasmic" evidence="1">
    <location>
        <begin position="739"/>
        <end position="760"/>
    </location>
</feature>
<feature type="transmembrane region" description="Helical" evidence="2">
    <location>
        <begin position="761"/>
        <end position="781"/>
    </location>
</feature>
<feature type="topological domain" description="Vacuolar" evidence="1">
    <location>
        <begin position="782"/>
        <end position="793"/>
    </location>
</feature>
<feature type="region of interest" description="Disordered" evidence="3">
    <location>
        <begin position="575"/>
        <end position="595"/>
    </location>
</feature>
<feature type="compositionally biased region" description="Basic and acidic residues" evidence="3">
    <location>
        <begin position="586"/>
        <end position="595"/>
    </location>
</feature>
<feature type="active site" evidence="1">
    <location>
        <position position="473"/>
    </location>
</feature>
<feature type="binding site" evidence="1">
    <location>
        <position position="215"/>
    </location>
    <ligand>
        <name>ATP</name>
        <dbReference type="ChEBI" id="CHEBI:30616"/>
    </ligand>
</feature>
<feature type="binding site" evidence="1">
    <location>
        <position position="286"/>
    </location>
    <ligand>
        <name>ATP</name>
        <dbReference type="ChEBI" id="CHEBI:30616"/>
    </ligand>
</feature>
<feature type="binding site" evidence="1">
    <location>
        <position position="288"/>
    </location>
    <ligand>
        <name>ATP</name>
        <dbReference type="ChEBI" id="CHEBI:30616"/>
    </ligand>
</feature>
<feature type="binding site" evidence="1">
    <location>
        <position position="312"/>
    </location>
    <ligand>
        <name>ATP</name>
        <dbReference type="ChEBI" id="CHEBI:30616"/>
    </ligand>
</feature>
<feature type="binding site" evidence="1">
    <location>
        <position position="325"/>
    </location>
    <ligand>
        <name>ATP</name>
        <dbReference type="ChEBI" id="CHEBI:30616"/>
    </ligand>
</feature>
<feature type="binding site" evidence="1">
    <location>
        <position position="391"/>
    </location>
    <ligand>
        <name>ATP</name>
        <dbReference type="ChEBI" id="CHEBI:30616"/>
    </ligand>
</feature>
<feature type="binding site" evidence="1">
    <location>
        <position position="441"/>
    </location>
    <ligand>
        <name>Mn(2+)</name>
        <dbReference type="ChEBI" id="CHEBI:29035"/>
    </ligand>
</feature>
<keyword id="KW-0067">ATP-binding</keyword>
<keyword id="KW-0464">Manganese</keyword>
<keyword id="KW-0472">Membrane</keyword>
<keyword id="KW-0479">Metal-binding</keyword>
<keyword id="KW-0547">Nucleotide-binding</keyword>
<keyword id="KW-1185">Reference proteome</keyword>
<keyword id="KW-0808">Transferase</keyword>
<keyword id="KW-0812">Transmembrane</keyword>
<keyword id="KW-1133">Transmembrane helix</keyword>
<evidence type="ECO:0000250" key="1">
    <source>
        <dbReference type="UniProtKB" id="P47075"/>
    </source>
</evidence>
<evidence type="ECO:0000255" key="2"/>
<evidence type="ECO:0000256" key="3">
    <source>
        <dbReference type="SAM" id="MobiDB-lite"/>
    </source>
</evidence>
<evidence type="ECO:0000269" key="4">
    <source>
    </source>
</evidence>
<evidence type="ECO:0000269" key="5">
    <source>
    </source>
</evidence>
<evidence type="ECO:0000305" key="6"/>
<evidence type="ECO:0000312" key="7">
    <source>
        <dbReference type="EMBL" id="EAN80172.1"/>
    </source>
</evidence>
<evidence type="ECO:0000312" key="8">
    <source>
        <dbReference type="Proteomes" id="UP000008524"/>
    </source>
</evidence>
<reference evidence="7 8" key="1">
    <citation type="journal article" date="2005" name="Science">
        <title>The genome of the African trypanosome Trypanosoma brucei.</title>
        <authorList>
            <person name="Berriman M."/>
            <person name="Ghedin E."/>
            <person name="Hertz-Fowler C."/>
            <person name="Blandin G."/>
            <person name="Renauld H."/>
            <person name="Bartholomeu D.C."/>
            <person name="Lennard N.J."/>
            <person name="Caler E."/>
            <person name="Hamlin N.E."/>
            <person name="Haas B."/>
            <person name="Bohme U."/>
            <person name="Hannick L."/>
            <person name="Aslett M.A."/>
            <person name="Shallom J."/>
            <person name="Marcello L."/>
            <person name="Hou L."/>
            <person name="Wickstead B."/>
            <person name="Alsmark U.C.M."/>
            <person name="Arrowsmith C."/>
            <person name="Atkin R.J."/>
            <person name="Barron A.J."/>
            <person name="Bringaud F."/>
            <person name="Brooks K."/>
            <person name="Carrington M."/>
            <person name="Cherevach I."/>
            <person name="Chillingworth T.J."/>
            <person name="Churcher C."/>
            <person name="Clark L.N."/>
            <person name="Corton C.H."/>
            <person name="Cronin A."/>
            <person name="Davies R.M."/>
            <person name="Doggett J."/>
            <person name="Djikeng A."/>
            <person name="Feldblyum T."/>
            <person name="Field M.C."/>
            <person name="Fraser A."/>
            <person name="Goodhead I."/>
            <person name="Hance Z."/>
            <person name="Harper D."/>
            <person name="Harris B.R."/>
            <person name="Hauser H."/>
            <person name="Hostetler J."/>
            <person name="Ivens A."/>
            <person name="Jagels K."/>
            <person name="Johnson D."/>
            <person name="Johnson J."/>
            <person name="Jones K."/>
            <person name="Kerhornou A.X."/>
            <person name="Koo H."/>
            <person name="Larke N."/>
            <person name="Landfear S."/>
            <person name="Larkin C."/>
            <person name="Leech V."/>
            <person name="Line A."/>
            <person name="Lord A."/>
            <person name="Macleod A."/>
            <person name="Mooney P.J."/>
            <person name="Moule S."/>
            <person name="Martin D.M."/>
            <person name="Morgan G.W."/>
            <person name="Mungall K."/>
            <person name="Norbertczak H."/>
            <person name="Ormond D."/>
            <person name="Pai G."/>
            <person name="Peacock C.S."/>
            <person name="Peterson J."/>
            <person name="Quail M.A."/>
            <person name="Rabbinowitsch E."/>
            <person name="Rajandream M.A."/>
            <person name="Reitter C."/>
            <person name="Salzberg S.L."/>
            <person name="Sanders M."/>
            <person name="Schobel S."/>
            <person name="Sharp S."/>
            <person name="Simmonds M."/>
            <person name="Simpson A.J."/>
            <person name="Tallon L."/>
            <person name="Turner C.M."/>
            <person name="Tait A."/>
            <person name="Tivey A.R."/>
            <person name="Van Aken S."/>
            <person name="Walker D."/>
            <person name="Wanless D."/>
            <person name="Wang S."/>
            <person name="White B."/>
            <person name="White O."/>
            <person name="Whitehead S."/>
            <person name="Woodward J."/>
            <person name="Wortman J."/>
            <person name="Adams M.D."/>
            <person name="Embley T.M."/>
            <person name="Gull K."/>
            <person name="Ullu E."/>
            <person name="Barry J.D."/>
            <person name="Fairlamb A.H."/>
            <person name="Opperdoes F."/>
            <person name="Barrell B.G."/>
            <person name="Donelson J.E."/>
            <person name="Hall N."/>
            <person name="Fraser C.M."/>
            <person name="Melville S.E."/>
            <person name="El-Sayed N.M.A."/>
        </authorList>
    </citation>
    <scope>NUCLEOTIDE SEQUENCE [LARGE SCALE GENOMIC DNA]</scope>
    <source>
        <strain evidence="7 8">927/4 GUTat10.1</strain>
    </source>
</reference>
<reference key="2">
    <citation type="journal article" date="2013" name="J. Biol. Chem.">
        <title>Trypanosoma brucei vacuolar transporter chaperone 4 (TbVtc4) is an acidocalcisome polyphosphate kinase required for in vivo infection.</title>
        <authorList>
            <person name="Lander N."/>
            <person name="Ulrich P.N."/>
            <person name="Docampo R."/>
        </authorList>
    </citation>
    <scope>FUNCTION</scope>
    <scope>CATALYTIC ACTIVITY</scope>
    <scope>BIOPHYSICOCHEMICAL PROPERTIES</scope>
    <scope>SUBCELLULAR LOCATION</scope>
    <scope>DISRUPTION PHENOTYPE</scope>
</reference>
<reference key="3">
    <citation type="journal article" date="2014" name="J. Eukaryot. Microbiol.">
        <title>The acidocalcisome vacuolar transporter chaperone 4 catalyzes the synthesis of polyphosphate in insect-stages of Trypanosoma brucei and T. cruzi.</title>
        <authorList>
            <person name="Ulrich P.N."/>
            <person name="Lander N."/>
            <person name="Kurup S.P."/>
            <person name="Reiss L."/>
            <person name="Brewer J."/>
            <person name="Soares Medeiros L.C."/>
            <person name="Miranda K."/>
            <person name="Docampo R."/>
        </authorList>
    </citation>
    <scope>SUBCELLULAR LOCATION</scope>
    <scope>DISRUPTION PHENOTYPE</scope>
</reference>
<sequence>MPFSKAWRSAVYPDFREQGAYINYKATKDTLHRMKEDIANPATPDELYNSLLMQKATVYKWCENKVKELQMMAEALMKASDYLSEEETPTNMSMVFSMVGSSEAKYLPPSDARRVADAITYELLRFVECRNLNTDTIEHIIARMYRYAVLGPTGDRWKNINKEYDYHALSIDEIFFMLSKVYEHVNEVESMRRDGRSSIPCGTVGSQVFDRRSVKYWVHMQDLPFVIARIIPHLPLSTFQDTYAMSKERGVPFTLGSPISSVYYDNDKFLLYHRRLERLDGATLIRMRWYGRPLDSDWNKLESKDSVFMEIKVHHEAWSGERSNKRRFALKEKDVDAYIRGDLSLKPALEKLRSKNASEAEQEKFMSLATEILTKIHAYDLKPVLRTQCQRAAFQCGLDQSIRISIDTDLRVVAEDFGLSHHWRYNGADAPLSHFPYAVVEVKLQCAENERIAPWIEELMNCRYMESVPKFSKYAHGIATLYGHTPFIKMVPYWMPQLDIDIRASTKPEYNQWDPTIGIASGCWERTTDRVIFGTGHAQTQTVGASEARFLPRTDCLRTYQRVLKAIKRGAHMNSVAPTMSPTDRPPSDEKKLTEQQELAPVVQYDTDRRHKAYTAFHLYPYCEDGVESLCFTSTGGKHVAAEVFSGLIPWQTGKRIRVPQKYDPKTLLTSERFMVKWAEQATRVGVVGLAVIRFGNSMSLPNDMVAVHSFWRANFHIVLGSLMVVVAECVLVYAYVTFKSRSRRVYARRKIRYDDRRGPVALTFVILAVILITVMMHVMVRYGPMLTGSDTF</sequence>